<comment type="function">
    <text evidence="1">Heme chaperone required for the biogenesis of c-type cytochromes. Transiently binds heme delivered by CcmC and transfers the heme to apo-cytochromes in a process facilitated by CcmF and CcmH.</text>
</comment>
<comment type="subcellular location">
    <subcellularLocation>
        <location evidence="1">Cell inner membrane</location>
        <topology evidence="1">Single-pass type II membrane protein</topology>
        <orientation evidence="1">Periplasmic side</orientation>
    </subcellularLocation>
</comment>
<comment type="similarity">
    <text evidence="1">Belongs to the CcmE/CycJ family.</text>
</comment>
<name>CCME_XANP2</name>
<sequence>MTRKGRRLVLIGAGLGVLALAAGLILSALNDTIVFFRSPTEVAQQQVAPGARLRLGGLVETGSVVKSGTLTTFKVTDGNATVKVAYSGILPDLFREGQGVVAEGALQPDGSFKADSVLAKHDEKYMPREVADALKKQGRWQEGGPAPGTAAPVQRAPGS</sequence>
<protein>
    <recommendedName>
        <fullName evidence="1">Cytochrome c-type biogenesis protein CcmE</fullName>
    </recommendedName>
    <alternativeName>
        <fullName evidence="1">Cytochrome c maturation protein E</fullName>
    </alternativeName>
    <alternativeName>
        <fullName evidence="1">Heme chaperone CcmE</fullName>
    </alternativeName>
</protein>
<evidence type="ECO:0000255" key="1">
    <source>
        <dbReference type="HAMAP-Rule" id="MF_01959"/>
    </source>
</evidence>
<evidence type="ECO:0000256" key="2">
    <source>
        <dbReference type="SAM" id="MobiDB-lite"/>
    </source>
</evidence>
<reference key="1">
    <citation type="submission" date="2007-07" db="EMBL/GenBank/DDBJ databases">
        <title>Complete sequence of chromosome of Xanthobacter autotrophicus Py2.</title>
        <authorList>
            <consortium name="US DOE Joint Genome Institute"/>
            <person name="Copeland A."/>
            <person name="Lucas S."/>
            <person name="Lapidus A."/>
            <person name="Barry K."/>
            <person name="Glavina del Rio T."/>
            <person name="Hammon N."/>
            <person name="Israni S."/>
            <person name="Dalin E."/>
            <person name="Tice H."/>
            <person name="Pitluck S."/>
            <person name="Sims D."/>
            <person name="Brettin T."/>
            <person name="Bruce D."/>
            <person name="Detter J.C."/>
            <person name="Han C."/>
            <person name="Tapia R."/>
            <person name="Brainard J."/>
            <person name="Schmutz J."/>
            <person name="Larimer F."/>
            <person name="Land M."/>
            <person name="Hauser L."/>
            <person name="Kyrpides N."/>
            <person name="Kim E."/>
            <person name="Ensigns S.A."/>
            <person name="Richardson P."/>
        </authorList>
    </citation>
    <scope>NUCLEOTIDE SEQUENCE [LARGE SCALE GENOMIC DNA]</scope>
    <source>
        <strain>ATCC BAA-1158 / Py2</strain>
    </source>
</reference>
<gene>
    <name evidence="1" type="primary">ccmE</name>
    <name evidence="1" type="synonym">cycJ</name>
    <name type="ordered locus">Xaut_1656</name>
</gene>
<feature type="chain" id="PRO_1000189061" description="Cytochrome c-type biogenesis protein CcmE">
    <location>
        <begin position="1"/>
        <end position="159"/>
    </location>
</feature>
<feature type="topological domain" description="Cytoplasmic" evidence="1">
    <location>
        <begin position="1"/>
        <end position="7"/>
    </location>
</feature>
<feature type="transmembrane region" description="Helical; Signal-anchor for type II membrane protein" evidence="1">
    <location>
        <begin position="8"/>
        <end position="28"/>
    </location>
</feature>
<feature type="topological domain" description="Periplasmic" evidence="1">
    <location>
        <begin position="29"/>
        <end position="159"/>
    </location>
</feature>
<feature type="region of interest" description="Disordered" evidence="2">
    <location>
        <begin position="134"/>
        <end position="159"/>
    </location>
</feature>
<feature type="binding site" description="covalent" evidence="1">
    <location>
        <position position="121"/>
    </location>
    <ligand>
        <name>heme</name>
        <dbReference type="ChEBI" id="CHEBI:30413"/>
    </ligand>
</feature>
<feature type="binding site" description="axial binding residue" evidence="1">
    <location>
        <position position="125"/>
    </location>
    <ligand>
        <name>heme</name>
        <dbReference type="ChEBI" id="CHEBI:30413"/>
    </ligand>
    <ligandPart>
        <name>Fe</name>
        <dbReference type="ChEBI" id="CHEBI:18248"/>
    </ligandPart>
</feature>
<dbReference type="EMBL" id="CP000781">
    <property type="protein sequence ID" value="ABS66901.1"/>
    <property type="molecule type" value="Genomic_DNA"/>
</dbReference>
<dbReference type="SMR" id="A7IFV8"/>
<dbReference type="STRING" id="78245.Xaut_1656"/>
<dbReference type="KEGG" id="xau:Xaut_1656"/>
<dbReference type="eggNOG" id="COG2332">
    <property type="taxonomic scope" value="Bacteria"/>
</dbReference>
<dbReference type="HOGENOM" id="CLU_079503_1_1_5"/>
<dbReference type="OrthoDB" id="9793584at2"/>
<dbReference type="PhylomeDB" id="A7IFV8"/>
<dbReference type="Proteomes" id="UP000002417">
    <property type="component" value="Chromosome"/>
</dbReference>
<dbReference type="GO" id="GO:0005886">
    <property type="term" value="C:plasma membrane"/>
    <property type="evidence" value="ECO:0007669"/>
    <property type="project" value="UniProtKB-SubCell"/>
</dbReference>
<dbReference type="GO" id="GO:0020037">
    <property type="term" value="F:heme binding"/>
    <property type="evidence" value="ECO:0007669"/>
    <property type="project" value="InterPro"/>
</dbReference>
<dbReference type="GO" id="GO:0046872">
    <property type="term" value="F:metal ion binding"/>
    <property type="evidence" value="ECO:0007669"/>
    <property type="project" value="UniProtKB-KW"/>
</dbReference>
<dbReference type="GO" id="GO:0017004">
    <property type="term" value="P:cytochrome complex assembly"/>
    <property type="evidence" value="ECO:0007669"/>
    <property type="project" value="UniProtKB-KW"/>
</dbReference>
<dbReference type="FunFam" id="2.40.50.140:FF:000104">
    <property type="entry name" value="Cytochrome c-type biogenesis protein CcmE"/>
    <property type="match status" value="1"/>
</dbReference>
<dbReference type="Gene3D" id="2.40.50.140">
    <property type="entry name" value="Nucleic acid-binding proteins"/>
    <property type="match status" value="1"/>
</dbReference>
<dbReference type="HAMAP" id="MF_01959">
    <property type="entry name" value="CcmE"/>
    <property type="match status" value="1"/>
</dbReference>
<dbReference type="InterPro" id="IPR004329">
    <property type="entry name" value="CcmE"/>
</dbReference>
<dbReference type="InterPro" id="IPR036127">
    <property type="entry name" value="CcmE-like_sf"/>
</dbReference>
<dbReference type="InterPro" id="IPR012340">
    <property type="entry name" value="NA-bd_OB-fold"/>
</dbReference>
<dbReference type="NCBIfam" id="NF009727">
    <property type="entry name" value="PRK13254.1-1"/>
    <property type="match status" value="1"/>
</dbReference>
<dbReference type="NCBIfam" id="NF009731">
    <property type="entry name" value="PRK13254.1-5"/>
    <property type="match status" value="1"/>
</dbReference>
<dbReference type="PANTHER" id="PTHR34128">
    <property type="entry name" value="CYTOCHROME C-TYPE BIOGENESIS PROTEIN CCME HOMOLOG, MITOCHONDRIAL"/>
    <property type="match status" value="1"/>
</dbReference>
<dbReference type="PANTHER" id="PTHR34128:SF2">
    <property type="entry name" value="CYTOCHROME C-TYPE BIOGENESIS PROTEIN CCME HOMOLOG, MITOCHONDRIAL"/>
    <property type="match status" value="1"/>
</dbReference>
<dbReference type="Pfam" id="PF03100">
    <property type="entry name" value="CcmE"/>
    <property type="match status" value="1"/>
</dbReference>
<dbReference type="SUPFAM" id="SSF82093">
    <property type="entry name" value="Heme chaperone CcmE"/>
    <property type="match status" value="1"/>
</dbReference>
<keyword id="KW-0997">Cell inner membrane</keyword>
<keyword id="KW-1003">Cell membrane</keyword>
<keyword id="KW-0201">Cytochrome c-type biogenesis</keyword>
<keyword id="KW-0349">Heme</keyword>
<keyword id="KW-0408">Iron</keyword>
<keyword id="KW-0472">Membrane</keyword>
<keyword id="KW-0479">Metal-binding</keyword>
<keyword id="KW-1185">Reference proteome</keyword>
<keyword id="KW-0735">Signal-anchor</keyword>
<keyword id="KW-0812">Transmembrane</keyword>
<keyword id="KW-1133">Transmembrane helix</keyword>
<proteinExistence type="inferred from homology"/>
<organism>
    <name type="scientific">Xanthobacter autotrophicus (strain ATCC BAA-1158 / Py2)</name>
    <dbReference type="NCBI Taxonomy" id="78245"/>
    <lineage>
        <taxon>Bacteria</taxon>
        <taxon>Pseudomonadati</taxon>
        <taxon>Pseudomonadota</taxon>
        <taxon>Alphaproteobacteria</taxon>
        <taxon>Hyphomicrobiales</taxon>
        <taxon>Xanthobacteraceae</taxon>
        <taxon>Xanthobacter</taxon>
    </lineage>
</organism>
<accession>A7IFV8</accession>